<keyword id="KW-0134">Cell wall</keyword>
<keyword id="KW-0961">Cell wall biogenesis/degradation</keyword>
<keyword id="KW-0472">Membrane</keyword>
<keyword id="KW-1185">Reference proteome</keyword>
<keyword id="KW-0964">Secreted</keyword>
<keyword id="KW-0732">Signal</keyword>
<accession>Q7XUD0</accession>
<accession>A3AWS3</accession>
<accession>Q9M4X5</accession>
<organism>
    <name type="scientific">Oryza sativa subsp. japonica</name>
    <name type="common">Rice</name>
    <dbReference type="NCBI Taxonomy" id="39947"/>
    <lineage>
        <taxon>Eukaryota</taxon>
        <taxon>Viridiplantae</taxon>
        <taxon>Streptophyta</taxon>
        <taxon>Embryophyta</taxon>
        <taxon>Tracheophyta</taxon>
        <taxon>Spermatophyta</taxon>
        <taxon>Magnoliopsida</taxon>
        <taxon>Liliopsida</taxon>
        <taxon>Poales</taxon>
        <taxon>Poaceae</taxon>
        <taxon>BOP clade</taxon>
        <taxon>Oryzoideae</taxon>
        <taxon>Oryzeae</taxon>
        <taxon>Oryzinae</taxon>
        <taxon>Oryza</taxon>
        <taxon>Oryza sativa</taxon>
    </lineage>
</organism>
<proteinExistence type="evidence at transcript level"/>
<gene>
    <name type="primary">EXPA10</name>
    <name type="synonym">EXP10</name>
    <name type="ordered locus">Os04g0583500</name>
    <name type="ordered locus">LOC_Os04g49410</name>
    <name evidence="8" type="ORF">OsJ_15914</name>
    <name type="ORF">OSJNBa0088A01.16</name>
</gene>
<sequence length="257" mass="27551">MAPCLLLVLFLLPALATGHQHPSTLGSSALSEWRSAKASYYAADPEDAIGGACGFGDLGKHGYGMATVGLSTALFERGAACGGCYEVKCVDDLKYCLPGTSIVVTATNFCAPNFGLPADAGGVCNPPNHHFLLPIQSFEKIALWKAGVMPIQYRRVNCLRDGGVRFAVAGRSFFLTVLISNVGGAGDVRSVKIKGTESGWLSMGRNWGQIWHINSDFRGQPLSFELTSSDGKTLTNYNVVPKEWDFGKTYTGKQFLL</sequence>
<name>EXP10_ORYSJ</name>
<dbReference type="EMBL" id="AF247165">
    <property type="protein sequence ID" value="AAF62183.1"/>
    <property type="molecule type" value="mRNA"/>
</dbReference>
<dbReference type="EMBL" id="AL662987">
    <property type="protein sequence ID" value="CAD41376.2"/>
    <property type="molecule type" value="Genomic_DNA"/>
</dbReference>
<dbReference type="EMBL" id="AP008210">
    <property type="protein sequence ID" value="BAF15577.1"/>
    <property type="molecule type" value="Genomic_DNA"/>
</dbReference>
<dbReference type="EMBL" id="AP014960">
    <property type="protein sequence ID" value="BAS90671.1"/>
    <property type="molecule type" value="Genomic_DNA"/>
</dbReference>
<dbReference type="EMBL" id="CM000141">
    <property type="protein sequence ID" value="EAZ31762.1"/>
    <property type="molecule type" value="Genomic_DNA"/>
</dbReference>
<dbReference type="RefSeq" id="XP_015636818.1">
    <property type="nucleotide sequence ID" value="XM_015781332.1"/>
</dbReference>
<dbReference type="SMR" id="Q7XUD0"/>
<dbReference type="FunCoup" id="Q7XUD0">
    <property type="interactions" value="1920"/>
</dbReference>
<dbReference type="STRING" id="39947.Q7XUD0"/>
<dbReference type="PaxDb" id="39947-Q7XUD0"/>
<dbReference type="EnsemblPlants" id="Os04t0583500-01">
    <property type="protein sequence ID" value="Os04t0583500-01"/>
    <property type="gene ID" value="Os04g0583500"/>
</dbReference>
<dbReference type="Gramene" id="Os04t0583500-01">
    <property type="protein sequence ID" value="Os04t0583500-01"/>
    <property type="gene ID" value="Os04g0583500"/>
</dbReference>
<dbReference type="KEGG" id="dosa:Os04g0583500"/>
<dbReference type="eggNOG" id="ENOG502QVFR">
    <property type="taxonomic scope" value="Eukaryota"/>
</dbReference>
<dbReference type="HOGENOM" id="CLU_027462_0_1_1"/>
<dbReference type="InParanoid" id="Q7XUD0"/>
<dbReference type="OMA" id="VEDPLYC"/>
<dbReference type="OrthoDB" id="5823761at2759"/>
<dbReference type="Proteomes" id="UP000000763">
    <property type="component" value="Chromosome 4"/>
</dbReference>
<dbReference type="Proteomes" id="UP000007752">
    <property type="component" value="Chromosome 4"/>
</dbReference>
<dbReference type="Proteomes" id="UP000059680">
    <property type="component" value="Chromosome 4"/>
</dbReference>
<dbReference type="ExpressionAtlas" id="Q7XUD0">
    <property type="expression patterns" value="baseline and differential"/>
</dbReference>
<dbReference type="GO" id="GO:0005576">
    <property type="term" value="C:extracellular region"/>
    <property type="evidence" value="ECO:0007669"/>
    <property type="project" value="UniProtKB-KW"/>
</dbReference>
<dbReference type="GO" id="GO:0016020">
    <property type="term" value="C:membrane"/>
    <property type="evidence" value="ECO:0007669"/>
    <property type="project" value="UniProtKB-SubCell"/>
</dbReference>
<dbReference type="GO" id="GO:0009828">
    <property type="term" value="P:plant-type cell wall loosening"/>
    <property type="evidence" value="ECO:0000250"/>
    <property type="project" value="UniProtKB"/>
</dbReference>
<dbReference type="CDD" id="cd22274">
    <property type="entry name" value="DPBB_EXPA_N"/>
    <property type="match status" value="1"/>
</dbReference>
<dbReference type="Gene3D" id="2.60.40.760">
    <property type="entry name" value="Expansin, cellulose-binding-like domain"/>
    <property type="match status" value="1"/>
</dbReference>
<dbReference type="Gene3D" id="2.40.40.10">
    <property type="entry name" value="RlpA-like domain"/>
    <property type="match status" value="1"/>
</dbReference>
<dbReference type="InterPro" id="IPR007118">
    <property type="entry name" value="Expan_Lol_pI"/>
</dbReference>
<dbReference type="InterPro" id="IPR002963">
    <property type="entry name" value="Expansin"/>
</dbReference>
<dbReference type="InterPro" id="IPR007112">
    <property type="entry name" value="Expansin/allergen_DPBB_dom"/>
</dbReference>
<dbReference type="InterPro" id="IPR007117">
    <property type="entry name" value="Expansin_CBD"/>
</dbReference>
<dbReference type="InterPro" id="IPR036749">
    <property type="entry name" value="Expansin_CBD_sf"/>
</dbReference>
<dbReference type="InterPro" id="IPR009009">
    <property type="entry name" value="RlpA-like_DPBB"/>
</dbReference>
<dbReference type="InterPro" id="IPR036908">
    <property type="entry name" value="RlpA-like_sf"/>
</dbReference>
<dbReference type="PANTHER" id="PTHR31867">
    <property type="entry name" value="EXPANSIN-A15"/>
    <property type="match status" value="1"/>
</dbReference>
<dbReference type="Pfam" id="PF03330">
    <property type="entry name" value="DPBB_1"/>
    <property type="match status" value="1"/>
</dbReference>
<dbReference type="Pfam" id="PF01357">
    <property type="entry name" value="Expansin_C"/>
    <property type="match status" value="1"/>
</dbReference>
<dbReference type="PRINTS" id="PR01226">
    <property type="entry name" value="EXPANSIN"/>
</dbReference>
<dbReference type="PRINTS" id="PR01225">
    <property type="entry name" value="EXPANSNFAMLY"/>
</dbReference>
<dbReference type="SMART" id="SM00837">
    <property type="entry name" value="DPBB_1"/>
    <property type="match status" value="1"/>
</dbReference>
<dbReference type="SUPFAM" id="SSF50685">
    <property type="entry name" value="Barwin-like endoglucanases"/>
    <property type="match status" value="1"/>
</dbReference>
<dbReference type="SUPFAM" id="SSF49590">
    <property type="entry name" value="PHL pollen allergen"/>
    <property type="match status" value="1"/>
</dbReference>
<dbReference type="PROSITE" id="PS50843">
    <property type="entry name" value="EXPANSIN_CBD"/>
    <property type="match status" value="1"/>
</dbReference>
<dbReference type="PROSITE" id="PS50842">
    <property type="entry name" value="EXPANSIN_EG45"/>
    <property type="match status" value="1"/>
</dbReference>
<reference key="1">
    <citation type="journal article" date="2002" name="Plant Physiol.">
        <title>Expression of alpha-expansin and expansin-like genes in deepwater rice.</title>
        <authorList>
            <person name="Lee Y."/>
            <person name="Kende H."/>
        </authorList>
    </citation>
    <scope>NUCLEOTIDE SEQUENCE [MRNA]</scope>
    <scope>DEVELOPMENTAL STAGE</scope>
    <scope>INDUCTION</scope>
</reference>
<reference key="2">
    <citation type="journal article" date="2002" name="Nature">
        <title>Sequence and analysis of rice chromosome 4.</title>
        <authorList>
            <person name="Feng Q."/>
            <person name="Zhang Y."/>
            <person name="Hao P."/>
            <person name="Wang S."/>
            <person name="Fu G."/>
            <person name="Huang Y."/>
            <person name="Li Y."/>
            <person name="Zhu J."/>
            <person name="Liu Y."/>
            <person name="Hu X."/>
            <person name="Jia P."/>
            <person name="Zhang Y."/>
            <person name="Zhao Q."/>
            <person name="Ying K."/>
            <person name="Yu S."/>
            <person name="Tang Y."/>
            <person name="Weng Q."/>
            <person name="Zhang L."/>
            <person name="Lu Y."/>
            <person name="Mu J."/>
            <person name="Lu Y."/>
            <person name="Zhang L.S."/>
            <person name="Yu Z."/>
            <person name="Fan D."/>
            <person name="Liu X."/>
            <person name="Lu T."/>
            <person name="Li C."/>
            <person name="Wu Y."/>
            <person name="Sun T."/>
            <person name="Lei H."/>
            <person name="Li T."/>
            <person name="Hu H."/>
            <person name="Guan J."/>
            <person name="Wu M."/>
            <person name="Zhang R."/>
            <person name="Zhou B."/>
            <person name="Chen Z."/>
            <person name="Chen L."/>
            <person name="Jin Z."/>
            <person name="Wang R."/>
            <person name="Yin H."/>
            <person name="Cai Z."/>
            <person name="Ren S."/>
            <person name="Lv G."/>
            <person name="Gu W."/>
            <person name="Zhu G."/>
            <person name="Tu Y."/>
            <person name="Jia J."/>
            <person name="Zhang Y."/>
            <person name="Chen J."/>
            <person name="Kang H."/>
            <person name="Chen X."/>
            <person name="Shao C."/>
            <person name="Sun Y."/>
            <person name="Hu Q."/>
            <person name="Zhang X."/>
            <person name="Zhang W."/>
            <person name="Wang L."/>
            <person name="Ding C."/>
            <person name="Sheng H."/>
            <person name="Gu J."/>
            <person name="Chen S."/>
            <person name="Ni L."/>
            <person name="Zhu F."/>
            <person name="Chen W."/>
            <person name="Lan L."/>
            <person name="Lai Y."/>
            <person name="Cheng Z."/>
            <person name="Gu M."/>
            <person name="Jiang J."/>
            <person name="Li J."/>
            <person name="Hong G."/>
            <person name="Xue Y."/>
            <person name="Han B."/>
        </authorList>
    </citation>
    <scope>NUCLEOTIDE SEQUENCE [LARGE SCALE GENOMIC DNA]</scope>
    <source>
        <strain>cv. Nipponbare</strain>
    </source>
</reference>
<reference key="3">
    <citation type="journal article" date="2005" name="Nature">
        <title>The map-based sequence of the rice genome.</title>
        <authorList>
            <consortium name="International rice genome sequencing project (IRGSP)"/>
        </authorList>
    </citation>
    <scope>NUCLEOTIDE SEQUENCE [LARGE SCALE GENOMIC DNA]</scope>
    <source>
        <strain>cv. Nipponbare</strain>
    </source>
</reference>
<reference key="4">
    <citation type="journal article" date="2008" name="Nucleic Acids Res.">
        <title>The rice annotation project database (RAP-DB): 2008 update.</title>
        <authorList>
            <consortium name="The rice annotation project (RAP)"/>
        </authorList>
    </citation>
    <scope>GENOME REANNOTATION</scope>
    <source>
        <strain>cv. Nipponbare</strain>
    </source>
</reference>
<reference key="5">
    <citation type="journal article" date="2013" name="Rice">
        <title>Improvement of the Oryza sativa Nipponbare reference genome using next generation sequence and optical map data.</title>
        <authorList>
            <person name="Kawahara Y."/>
            <person name="de la Bastide M."/>
            <person name="Hamilton J.P."/>
            <person name="Kanamori H."/>
            <person name="McCombie W.R."/>
            <person name="Ouyang S."/>
            <person name="Schwartz D.C."/>
            <person name="Tanaka T."/>
            <person name="Wu J."/>
            <person name="Zhou S."/>
            <person name="Childs K.L."/>
            <person name="Davidson R.M."/>
            <person name="Lin H."/>
            <person name="Quesada-Ocampo L."/>
            <person name="Vaillancourt B."/>
            <person name="Sakai H."/>
            <person name="Lee S.S."/>
            <person name="Kim J."/>
            <person name="Numa H."/>
            <person name="Itoh T."/>
            <person name="Buell C.R."/>
            <person name="Matsumoto T."/>
        </authorList>
    </citation>
    <scope>GENOME REANNOTATION</scope>
    <source>
        <strain>cv. Nipponbare</strain>
    </source>
</reference>
<reference key="6">
    <citation type="journal article" date="2005" name="PLoS Biol.">
        <title>The genomes of Oryza sativa: a history of duplications.</title>
        <authorList>
            <person name="Yu J."/>
            <person name="Wang J."/>
            <person name="Lin W."/>
            <person name="Li S."/>
            <person name="Li H."/>
            <person name="Zhou J."/>
            <person name="Ni P."/>
            <person name="Dong W."/>
            <person name="Hu S."/>
            <person name="Zeng C."/>
            <person name="Zhang J."/>
            <person name="Zhang Y."/>
            <person name="Li R."/>
            <person name="Xu Z."/>
            <person name="Li S."/>
            <person name="Li X."/>
            <person name="Zheng H."/>
            <person name="Cong L."/>
            <person name="Lin L."/>
            <person name="Yin J."/>
            <person name="Geng J."/>
            <person name="Li G."/>
            <person name="Shi J."/>
            <person name="Liu J."/>
            <person name="Lv H."/>
            <person name="Li J."/>
            <person name="Wang J."/>
            <person name="Deng Y."/>
            <person name="Ran L."/>
            <person name="Shi X."/>
            <person name="Wang X."/>
            <person name="Wu Q."/>
            <person name="Li C."/>
            <person name="Ren X."/>
            <person name="Wang J."/>
            <person name="Wang X."/>
            <person name="Li D."/>
            <person name="Liu D."/>
            <person name="Zhang X."/>
            <person name="Ji Z."/>
            <person name="Zhao W."/>
            <person name="Sun Y."/>
            <person name="Zhang Z."/>
            <person name="Bao J."/>
            <person name="Han Y."/>
            <person name="Dong L."/>
            <person name="Ji J."/>
            <person name="Chen P."/>
            <person name="Wu S."/>
            <person name="Liu J."/>
            <person name="Xiao Y."/>
            <person name="Bu D."/>
            <person name="Tan J."/>
            <person name="Yang L."/>
            <person name="Ye C."/>
            <person name="Zhang J."/>
            <person name="Xu J."/>
            <person name="Zhou Y."/>
            <person name="Yu Y."/>
            <person name="Zhang B."/>
            <person name="Zhuang S."/>
            <person name="Wei H."/>
            <person name="Liu B."/>
            <person name="Lei M."/>
            <person name="Yu H."/>
            <person name="Li Y."/>
            <person name="Xu H."/>
            <person name="Wei S."/>
            <person name="He X."/>
            <person name="Fang L."/>
            <person name="Zhang Z."/>
            <person name="Zhang Y."/>
            <person name="Huang X."/>
            <person name="Su Z."/>
            <person name="Tong W."/>
            <person name="Li J."/>
            <person name="Tong Z."/>
            <person name="Li S."/>
            <person name="Ye J."/>
            <person name="Wang L."/>
            <person name="Fang L."/>
            <person name="Lei T."/>
            <person name="Chen C.-S."/>
            <person name="Chen H.-C."/>
            <person name="Xu Z."/>
            <person name="Li H."/>
            <person name="Huang H."/>
            <person name="Zhang F."/>
            <person name="Xu H."/>
            <person name="Li N."/>
            <person name="Zhao C."/>
            <person name="Li S."/>
            <person name="Dong L."/>
            <person name="Huang Y."/>
            <person name="Li L."/>
            <person name="Xi Y."/>
            <person name="Qi Q."/>
            <person name="Li W."/>
            <person name="Zhang B."/>
            <person name="Hu W."/>
            <person name="Zhang Y."/>
            <person name="Tian X."/>
            <person name="Jiao Y."/>
            <person name="Liang X."/>
            <person name="Jin J."/>
            <person name="Gao L."/>
            <person name="Zheng W."/>
            <person name="Hao B."/>
            <person name="Liu S.-M."/>
            <person name="Wang W."/>
            <person name="Yuan L."/>
            <person name="Cao M."/>
            <person name="McDermott J."/>
            <person name="Samudrala R."/>
            <person name="Wang J."/>
            <person name="Wong G.K.-S."/>
            <person name="Yang H."/>
        </authorList>
    </citation>
    <scope>NUCLEOTIDE SEQUENCE [LARGE SCALE GENOMIC DNA]</scope>
    <source>
        <strain>cv. Nipponbare</strain>
    </source>
</reference>
<reference key="7">
    <citation type="journal article" date="2004" name="Plant Mol. Biol.">
        <title>Nomenclature for members of the expansin superfamily of genes and proteins.</title>
        <authorList>
            <person name="Kende H."/>
            <person name="Bradford K.J."/>
            <person name="Brummell D.A."/>
            <person name="Cho H.-T."/>
            <person name="Cosgrove D.J."/>
            <person name="Fleming A.J."/>
            <person name="Gehring C."/>
            <person name="Lee Y."/>
            <person name="McQueen-Mason S.J."/>
            <person name="Rose J.K.C."/>
            <person name="Voesenek L.A.C."/>
        </authorList>
    </citation>
    <scope>NOMENCLATURE</scope>
</reference>
<reference key="8">
    <citation type="journal article" date="2005" name="Mol. Cells">
        <title>Characterization and transcriptional expression of the alpha-expansin gene family in rice.</title>
        <authorList>
            <person name="Shin J.-H."/>
            <person name="Jeong D.-H."/>
            <person name="Park M.C."/>
            <person name="An G."/>
        </authorList>
    </citation>
    <scope>TISSUE SPECIFICITY</scope>
</reference>
<evidence type="ECO:0000250" key="1"/>
<evidence type="ECO:0000255" key="2"/>
<evidence type="ECO:0000255" key="3">
    <source>
        <dbReference type="PROSITE-ProRule" id="PRU00078"/>
    </source>
</evidence>
<evidence type="ECO:0000255" key="4">
    <source>
        <dbReference type="PROSITE-ProRule" id="PRU00079"/>
    </source>
</evidence>
<evidence type="ECO:0000269" key="5">
    <source>
    </source>
</evidence>
<evidence type="ECO:0000269" key="6">
    <source>
    </source>
</evidence>
<evidence type="ECO:0000305" key="7"/>
<evidence type="ECO:0000312" key="8">
    <source>
        <dbReference type="EMBL" id="EAZ31762.1"/>
    </source>
</evidence>
<comment type="function">
    <text evidence="1">May cause loosening and extension of plant cell walls by disrupting non-covalent bonding between cellulose microfibrils and matrix glucans. No enzymatic activity has been found. May be required for rapid internodal elongation in deepwater rice during submergence (By similarity).</text>
</comment>
<comment type="subcellular location">
    <subcellularLocation>
        <location evidence="1">Secreted</location>
        <location evidence="1">Cell wall</location>
    </subcellularLocation>
    <subcellularLocation>
        <location evidence="1">Membrane</location>
        <topology evidence="1">Peripheral membrane protein</topology>
    </subcellularLocation>
</comment>
<comment type="tissue specificity">
    <text evidence="6">Expressed in panicles and flowers.</text>
</comment>
<comment type="developmental stage">
    <text evidence="5">Expressed in the growing regions of roots, coleoptiles, internodes and leaves.</text>
</comment>
<comment type="induction">
    <text evidence="5">By gibberellin (GA3) and wounding.</text>
</comment>
<comment type="similarity">
    <text evidence="7">Belongs to the expansin family. Expansin A subfamily.</text>
</comment>
<comment type="online information" name="EXPANSIN homepage">
    <link uri="https://www.dept.psu.edu/biology/groups/expansins/index.htm"/>
</comment>
<feature type="signal peptide" evidence="2">
    <location>
        <begin position="1"/>
        <end position="18"/>
    </location>
</feature>
<feature type="chain" id="PRO_0000251989" description="Expansin-A10">
    <location>
        <begin position="19"/>
        <end position="257"/>
    </location>
</feature>
<feature type="domain" description="Expansin-like EG45" evidence="4">
    <location>
        <begin position="50"/>
        <end position="163"/>
    </location>
</feature>
<feature type="domain" description="Expansin-like CBD" evidence="3">
    <location>
        <begin position="173"/>
        <end position="252"/>
    </location>
</feature>
<protein>
    <recommendedName>
        <fullName>Expansin-A10</fullName>
    </recommendedName>
    <alternativeName>
        <fullName>Alpha-expansin-10</fullName>
    </alternativeName>
    <alternativeName>
        <fullName>OsEXP10</fullName>
    </alternativeName>
    <alternativeName>
        <fullName>OsEXPA10</fullName>
    </alternativeName>
    <alternativeName>
        <fullName>OsaEXPa1.28</fullName>
    </alternativeName>
</protein>